<name>SYA_IDILO</name>
<protein>
    <recommendedName>
        <fullName evidence="1">Alanine--tRNA ligase</fullName>
        <ecNumber evidence="1">6.1.1.7</ecNumber>
    </recommendedName>
    <alternativeName>
        <fullName evidence="1">Alanyl-tRNA synthetase</fullName>
        <shortName evidence="1">AlaRS</shortName>
    </alternativeName>
</protein>
<sequence length="865" mass="95529">MSMNSAQIRDAFLNYFAERGHEKVPSASMIPGNDPTLLFTNAGMVPFKDVFLGTDKRRYDKATSAQRCLRAGGKHNDLENVGYTARHHTFFEMMGNFSFGDYFKKQAIQYAWDFLTKELKLPAEKLWVTVFTEDDEAYDIWVKDIGVPEDRISRIGEKDNFWSMGDTGPCGPCSEVFYDHGEEVWGGPPGTPEEDGDRYIEIWNLVFMQYNRQADGTLEPLPDPSIDTGMGLERISAIMQNVHSNYEIDLFQALIKAAAEIIGTNDLDNKSLRVIADHIRSCSFLITDGVMPSNEGRGYVLRRIIRRAVRHGHLLGAKDTFFFRLVDELARQMGEAYPELEQKKQIIKDALEREEQQFARTLERGLAILSDEIGELKGNVIPGDVVFKLYDTYGFPVDLTADIAREQELTIDEQGFEQAMSEQRQRAQQASQFGMDYNQQLKSDNKTAFTGYDDVVGQAKVVELFKDGKPVEQLQAGENGIVVLSETPFYAESGGQIGDKGVLVANGPAFEVTDTQYIGKAIAHHGVAKAAVKLSDSVKAEIDSERRENIKRNHSATHLLHAALRNLLGEHVTQKGSLVEADKMRFDFSHFEPVTTEQLAQLEREVNAQVRANLPLQTQLMAIDEAKEAGAMALFGEKYDEQVRVVRMGDFSMELCGGTHVKATGDIGLFRITSEGGIASGVRRIEVVTGEAAVRYTQQQQSVLQQIAGELKTEPSSVAEKVQQLQHKFRELERKNEQLQQKLAQQAGGGLIAQAVDINGVKAIIAELDQADPKSLRGLVDDLKNQMGSGIVLLGTANGDKVSLIAGVTTDLTSKVKAGDIVNQAANVVGGKGGGRPDMAQAGGSLPEQLNEALATATTWLQQQL</sequence>
<reference key="1">
    <citation type="journal article" date="2004" name="Proc. Natl. Acad. Sci. U.S.A.">
        <title>Genome sequence of the deep-sea gamma-proteobacterium Idiomarina loihiensis reveals amino acid fermentation as a source of carbon and energy.</title>
        <authorList>
            <person name="Hou S."/>
            <person name="Saw J.H."/>
            <person name="Lee K.S."/>
            <person name="Freitas T.A."/>
            <person name="Belisle C."/>
            <person name="Kawarabayasi Y."/>
            <person name="Donachie S.P."/>
            <person name="Pikina A."/>
            <person name="Galperin M.Y."/>
            <person name="Koonin E.V."/>
            <person name="Makarova K.S."/>
            <person name="Omelchenko M.V."/>
            <person name="Sorokin A."/>
            <person name="Wolf Y.I."/>
            <person name="Li Q.X."/>
            <person name="Keum Y.S."/>
            <person name="Campbell S."/>
            <person name="Denery J."/>
            <person name="Aizawa S."/>
            <person name="Shibata S."/>
            <person name="Malahoff A."/>
            <person name="Alam M."/>
        </authorList>
    </citation>
    <scope>NUCLEOTIDE SEQUENCE [LARGE SCALE GENOMIC DNA]</scope>
    <source>
        <strain>ATCC BAA-735 / DSM 15497 / L2-TR</strain>
    </source>
</reference>
<evidence type="ECO:0000255" key="1">
    <source>
        <dbReference type="HAMAP-Rule" id="MF_00036"/>
    </source>
</evidence>
<organism>
    <name type="scientific">Idiomarina loihiensis (strain ATCC BAA-735 / DSM 15497 / L2-TR)</name>
    <dbReference type="NCBI Taxonomy" id="283942"/>
    <lineage>
        <taxon>Bacteria</taxon>
        <taxon>Pseudomonadati</taxon>
        <taxon>Pseudomonadota</taxon>
        <taxon>Gammaproteobacteria</taxon>
        <taxon>Alteromonadales</taxon>
        <taxon>Idiomarinaceae</taxon>
        <taxon>Idiomarina</taxon>
    </lineage>
</organism>
<proteinExistence type="inferred from homology"/>
<comment type="function">
    <text evidence="1">Catalyzes the attachment of alanine to tRNA(Ala) in a two-step reaction: alanine is first activated by ATP to form Ala-AMP and then transferred to the acceptor end of tRNA(Ala). Also edits incorrectly charged Ser-tRNA(Ala) and Gly-tRNA(Ala) via its editing domain.</text>
</comment>
<comment type="catalytic activity">
    <reaction evidence="1">
        <text>tRNA(Ala) + L-alanine + ATP = L-alanyl-tRNA(Ala) + AMP + diphosphate</text>
        <dbReference type="Rhea" id="RHEA:12540"/>
        <dbReference type="Rhea" id="RHEA-COMP:9657"/>
        <dbReference type="Rhea" id="RHEA-COMP:9923"/>
        <dbReference type="ChEBI" id="CHEBI:30616"/>
        <dbReference type="ChEBI" id="CHEBI:33019"/>
        <dbReference type="ChEBI" id="CHEBI:57972"/>
        <dbReference type="ChEBI" id="CHEBI:78442"/>
        <dbReference type="ChEBI" id="CHEBI:78497"/>
        <dbReference type="ChEBI" id="CHEBI:456215"/>
        <dbReference type="EC" id="6.1.1.7"/>
    </reaction>
</comment>
<comment type="cofactor">
    <cofactor evidence="1">
        <name>Zn(2+)</name>
        <dbReference type="ChEBI" id="CHEBI:29105"/>
    </cofactor>
    <text evidence="1">Binds 1 zinc ion per subunit.</text>
</comment>
<comment type="subcellular location">
    <subcellularLocation>
        <location evidence="1">Cytoplasm</location>
    </subcellularLocation>
</comment>
<comment type="domain">
    <text evidence="1">Consists of three domains; the N-terminal catalytic domain, the editing domain and the C-terminal C-Ala domain. The editing domain removes incorrectly charged amino acids, while the C-Ala domain, along with tRNA(Ala), serves as a bridge to cooperatively bring together the editing and aminoacylation centers thus stimulating deacylation of misacylated tRNAs.</text>
</comment>
<comment type="similarity">
    <text evidence="1">Belongs to the class-II aminoacyl-tRNA synthetase family.</text>
</comment>
<accession>Q5QUV7</accession>
<feature type="chain" id="PRO_0000075127" description="Alanine--tRNA ligase">
    <location>
        <begin position="1"/>
        <end position="865"/>
    </location>
</feature>
<feature type="binding site" evidence="1">
    <location>
        <position position="554"/>
    </location>
    <ligand>
        <name>Zn(2+)</name>
        <dbReference type="ChEBI" id="CHEBI:29105"/>
    </ligand>
</feature>
<feature type="binding site" evidence="1">
    <location>
        <position position="558"/>
    </location>
    <ligand>
        <name>Zn(2+)</name>
        <dbReference type="ChEBI" id="CHEBI:29105"/>
    </ligand>
</feature>
<feature type="binding site" evidence="1">
    <location>
        <position position="656"/>
    </location>
    <ligand>
        <name>Zn(2+)</name>
        <dbReference type="ChEBI" id="CHEBI:29105"/>
    </ligand>
</feature>
<feature type="binding site" evidence="1">
    <location>
        <position position="660"/>
    </location>
    <ligand>
        <name>Zn(2+)</name>
        <dbReference type="ChEBI" id="CHEBI:29105"/>
    </ligand>
</feature>
<dbReference type="EC" id="6.1.1.7" evidence="1"/>
<dbReference type="EMBL" id="AE017340">
    <property type="protein sequence ID" value="AAV82571.1"/>
    <property type="molecule type" value="Genomic_DNA"/>
</dbReference>
<dbReference type="RefSeq" id="WP_011234974.1">
    <property type="nucleotide sequence ID" value="NC_006512.1"/>
</dbReference>
<dbReference type="SMR" id="Q5QUV7"/>
<dbReference type="STRING" id="283942.IL1738"/>
<dbReference type="GeneID" id="41336915"/>
<dbReference type="KEGG" id="ilo:IL1738"/>
<dbReference type="eggNOG" id="COG0013">
    <property type="taxonomic scope" value="Bacteria"/>
</dbReference>
<dbReference type="HOGENOM" id="CLU_004485_1_1_6"/>
<dbReference type="OrthoDB" id="9803884at2"/>
<dbReference type="Proteomes" id="UP000001171">
    <property type="component" value="Chromosome"/>
</dbReference>
<dbReference type="GO" id="GO:0005829">
    <property type="term" value="C:cytosol"/>
    <property type="evidence" value="ECO:0007669"/>
    <property type="project" value="TreeGrafter"/>
</dbReference>
<dbReference type="GO" id="GO:0004813">
    <property type="term" value="F:alanine-tRNA ligase activity"/>
    <property type="evidence" value="ECO:0007669"/>
    <property type="project" value="UniProtKB-UniRule"/>
</dbReference>
<dbReference type="GO" id="GO:0002161">
    <property type="term" value="F:aminoacyl-tRNA deacylase activity"/>
    <property type="evidence" value="ECO:0007669"/>
    <property type="project" value="TreeGrafter"/>
</dbReference>
<dbReference type="GO" id="GO:0005524">
    <property type="term" value="F:ATP binding"/>
    <property type="evidence" value="ECO:0007669"/>
    <property type="project" value="UniProtKB-UniRule"/>
</dbReference>
<dbReference type="GO" id="GO:0000049">
    <property type="term" value="F:tRNA binding"/>
    <property type="evidence" value="ECO:0007669"/>
    <property type="project" value="UniProtKB-KW"/>
</dbReference>
<dbReference type="GO" id="GO:0008270">
    <property type="term" value="F:zinc ion binding"/>
    <property type="evidence" value="ECO:0007669"/>
    <property type="project" value="UniProtKB-UniRule"/>
</dbReference>
<dbReference type="GO" id="GO:0006419">
    <property type="term" value="P:alanyl-tRNA aminoacylation"/>
    <property type="evidence" value="ECO:0007669"/>
    <property type="project" value="UniProtKB-UniRule"/>
</dbReference>
<dbReference type="GO" id="GO:0045892">
    <property type="term" value="P:negative regulation of DNA-templated transcription"/>
    <property type="evidence" value="ECO:0007669"/>
    <property type="project" value="TreeGrafter"/>
</dbReference>
<dbReference type="CDD" id="cd00673">
    <property type="entry name" value="AlaRS_core"/>
    <property type="match status" value="1"/>
</dbReference>
<dbReference type="FunFam" id="2.40.30.130:FF:000001">
    <property type="entry name" value="Alanine--tRNA ligase"/>
    <property type="match status" value="1"/>
</dbReference>
<dbReference type="FunFam" id="3.10.310.40:FF:000001">
    <property type="entry name" value="Alanine--tRNA ligase"/>
    <property type="match status" value="1"/>
</dbReference>
<dbReference type="FunFam" id="3.30.54.20:FF:000001">
    <property type="entry name" value="Alanine--tRNA ligase"/>
    <property type="match status" value="1"/>
</dbReference>
<dbReference type="FunFam" id="3.30.930.10:FF:000004">
    <property type="entry name" value="Alanine--tRNA ligase"/>
    <property type="match status" value="1"/>
</dbReference>
<dbReference type="FunFam" id="3.30.980.10:FF:000004">
    <property type="entry name" value="Alanine--tRNA ligase, cytoplasmic"/>
    <property type="match status" value="1"/>
</dbReference>
<dbReference type="Gene3D" id="2.40.30.130">
    <property type="match status" value="1"/>
</dbReference>
<dbReference type="Gene3D" id="3.10.310.40">
    <property type="match status" value="1"/>
</dbReference>
<dbReference type="Gene3D" id="3.30.54.20">
    <property type="match status" value="1"/>
</dbReference>
<dbReference type="Gene3D" id="6.10.250.550">
    <property type="match status" value="1"/>
</dbReference>
<dbReference type="Gene3D" id="3.30.930.10">
    <property type="entry name" value="Bira Bifunctional Protein, Domain 2"/>
    <property type="match status" value="1"/>
</dbReference>
<dbReference type="Gene3D" id="3.30.980.10">
    <property type="entry name" value="Threonyl-trna Synthetase, Chain A, domain 2"/>
    <property type="match status" value="1"/>
</dbReference>
<dbReference type="HAMAP" id="MF_00036_B">
    <property type="entry name" value="Ala_tRNA_synth_B"/>
    <property type="match status" value="1"/>
</dbReference>
<dbReference type="InterPro" id="IPR045864">
    <property type="entry name" value="aa-tRNA-synth_II/BPL/LPL"/>
</dbReference>
<dbReference type="InterPro" id="IPR002318">
    <property type="entry name" value="Ala-tRNA-lgiase_IIc"/>
</dbReference>
<dbReference type="InterPro" id="IPR018162">
    <property type="entry name" value="Ala-tRNA-ligase_IIc_anticod-bd"/>
</dbReference>
<dbReference type="InterPro" id="IPR018165">
    <property type="entry name" value="Ala-tRNA-synth_IIc_core"/>
</dbReference>
<dbReference type="InterPro" id="IPR018164">
    <property type="entry name" value="Ala-tRNA-synth_IIc_N"/>
</dbReference>
<dbReference type="InterPro" id="IPR050058">
    <property type="entry name" value="Ala-tRNA_ligase"/>
</dbReference>
<dbReference type="InterPro" id="IPR023033">
    <property type="entry name" value="Ala_tRNA_ligase_euk/bac"/>
</dbReference>
<dbReference type="InterPro" id="IPR003156">
    <property type="entry name" value="DHHA1_dom"/>
</dbReference>
<dbReference type="InterPro" id="IPR018163">
    <property type="entry name" value="Thr/Ala-tRNA-synth_IIc_edit"/>
</dbReference>
<dbReference type="InterPro" id="IPR009000">
    <property type="entry name" value="Transl_B-barrel_sf"/>
</dbReference>
<dbReference type="InterPro" id="IPR012947">
    <property type="entry name" value="tRNA_SAD"/>
</dbReference>
<dbReference type="NCBIfam" id="TIGR00344">
    <property type="entry name" value="alaS"/>
    <property type="match status" value="1"/>
</dbReference>
<dbReference type="PANTHER" id="PTHR11777:SF9">
    <property type="entry name" value="ALANINE--TRNA LIGASE, CYTOPLASMIC"/>
    <property type="match status" value="1"/>
</dbReference>
<dbReference type="PANTHER" id="PTHR11777">
    <property type="entry name" value="ALANYL-TRNA SYNTHETASE"/>
    <property type="match status" value="1"/>
</dbReference>
<dbReference type="Pfam" id="PF02272">
    <property type="entry name" value="DHHA1"/>
    <property type="match status" value="1"/>
</dbReference>
<dbReference type="Pfam" id="PF01411">
    <property type="entry name" value="tRNA-synt_2c"/>
    <property type="match status" value="1"/>
</dbReference>
<dbReference type="Pfam" id="PF07973">
    <property type="entry name" value="tRNA_SAD"/>
    <property type="match status" value="1"/>
</dbReference>
<dbReference type="PRINTS" id="PR00980">
    <property type="entry name" value="TRNASYNTHALA"/>
</dbReference>
<dbReference type="SMART" id="SM00863">
    <property type="entry name" value="tRNA_SAD"/>
    <property type="match status" value="1"/>
</dbReference>
<dbReference type="SUPFAM" id="SSF55681">
    <property type="entry name" value="Class II aaRS and biotin synthetases"/>
    <property type="match status" value="1"/>
</dbReference>
<dbReference type="SUPFAM" id="SSF101353">
    <property type="entry name" value="Putative anticodon-binding domain of alanyl-tRNA synthetase (AlaRS)"/>
    <property type="match status" value="1"/>
</dbReference>
<dbReference type="SUPFAM" id="SSF55186">
    <property type="entry name" value="ThrRS/AlaRS common domain"/>
    <property type="match status" value="1"/>
</dbReference>
<dbReference type="SUPFAM" id="SSF50447">
    <property type="entry name" value="Translation proteins"/>
    <property type="match status" value="1"/>
</dbReference>
<dbReference type="PROSITE" id="PS50860">
    <property type="entry name" value="AA_TRNA_LIGASE_II_ALA"/>
    <property type="match status" value="1"/>
</dbReference>
<keyword id="KW-0030">Aminoacyl-tRNA synthetase</keyword>
<keyword id="KW-0067">ATP-binding</keyword>
<keyword id="KW-0963">Cytoplasm</keyword>
<keyword id="KW-0436">Ligase</keyword>
<keyword id="KW-0479">Metal-binding</keyword>
<keyword id="KW-0547">Nucleotide-binding</keyword>
<keyword id="KW-0648">Protein biosynthesis</keyword>
<keyword id="KW-1185">Reference proteome</keyword>
<keyword id="KW-0694">RNA-binding</keyword>
<keyword id="KW-0820">tRNA-binding</keyword>
<keyword id="KW-0862">Zinc</keyword>
<gene>
    <name evidence="1" type="primary">alaS</name>
    <name type="ordered locus">IL1738</name>
</gene>